<organism>
    <name type="scientific">Xenopus laevis</name>
    <name type="common">African clawed frog</name>
    <dbReference type="NCBI Taxonomy" id="8355"/>
    <lineage>
        <taxon>Eukaryota</taxon>
        <taxon>Metazoa</taxon>
        <taxon>Chordata</taxon>
        <taxon>Craniata</taxon>
        <taxon>Vertebrata</taxon>
        <taxon>Euteleostomi</taxon>
        <taxon>Amphibia</taxon>
        <taxon>Batrachia</taxon>
        <taxon>Anura</taxon>
        <taxon>Pipoidea</taxon>
        <taxon>Pipidae</taxon>
        <taxon>Xenopodinae</taxon>
        <taxon>Xenopus</taxon>
        <taxon>Xenopus</taxon>
    </lineage>
</organism>
<gene>
    <name evidence="2" type="primary">akt1</name>
</gene>
<feature type="chain" id="PRO_0000223507" description="RAC-alpha serine/threonine-protein kinase" evidence="9">
    <location>
        <begin position="1"/>
        <end position="481"/>
    </location>
</feature>
<feature type="domain" description="PH" evidence="3">
    <location>
        <begin position="5"/>
        <end position="108"/>
    </location>
</feature>
<feature type="domain" description="Protein kinase" evidence="4">
    <location>
        <begin position="151"/>
        <end position="409"/>
    </location>
</feature>
<feature type="domain" description="AGC-kinase C-terminal" evidence="5">
    <location>
        <begin position="410"/>
        <end position="481"/>
    </location>
</feature>
<feature type="region of interest" description="Disordered" evidence="7">
    <location>
        <begin position="120"/>
        <end position="141"/>
    </location>
</feature>
<feature type="active site" description="Proton acceptor" evidence="4 6">
    <location>
        <position position="275"/>
    </location>
</feature>
<feature type="binding site" evidence="4">
    <location>
        <begin position="157"/>
        <end position="165"/>
    </location>
    <ligand>
        <name>ATP</name>
        <dbReference type="ChEBI" id="CHEBI:30616"/>
    </ligand>
</feature>
<feature type="binding site" evidence="4">
    <location>
        <position position="180"/>
    </location>
    <ligand>
        <name>ATP</name>
        <dbReference type="ChEBI" id="CHEBI:30616"/>
    </ligand>
</feature>
<feature type="site" description="Cleavage; by caspase-3" evidence="2">
    <location>
        <position position="463"/>
    </location>
</feature>
<feature type="modified residue" description="Phosphothreonine; by PDPK1" evidence="1">
    <location>
        <position position="309"/>
    </location>
</feature>
<feature type="modified residue" description="Phosphoserine" evidence="1">
    <location>
        <position position="474"/>
    </location>
</feature>
<feature type="modified residue" description="Phosphotyrosine" evidence="1">
    <location>
        <position position="475"/>
    </location>
</feature>
<feature type="glycosylation site" description="O-linked (GlcNAc) serine" evidence="1">
    <location>
        <position position="127"/>
    </location>
</feature>
<feature type="glycosylation site" description="O-linked (GlcNAc) serine" evidence="1">
    <location>
        <position position="130"/>
    </location>
</feature>
<feature type="glycosylation site" description="O-linked (GlcNAc) threonine" evidence="1">
    <location>
        <position position="306"/>
    </location>
</feature>
<feature type="glycosylation site" description="O-linked (GlcNAc) threonine" evidence="1">
    <location>
        <position position="313"/>
    </location>
</feature>
<feature type="glycosylation site" description="O-linked (GlcNAc) serine; alternate" evidence="2">
    <location>
        <position position="474"/>
    </location>
</feature>
<dbReference type="EC" id="2.7.11.1" evidence="2"/>
<dbReference type="EMBL" id="AF317656">
    <property type="protein sequence ID" value="AAG59601.1"/>
    <property type="molecule type" value="mRNA"/>
</dbReference>
<dbReference type="SMR" id="Q98TY9"/>
<dbReference type="BioGRID" id="100495">
    <property type="interactions" value="1"/>
</dbReference>
<dbReference type="GlyCosmos" id="Q98TY9">
    <property type="glycosylation" value="5 sites, No reported glycans"/>
</dbReference>
<dbReference type="KEGG" id="xla:399170"/>
<dbReference type="AGR" id="Xenbase:XB-GENE-484957"/>
<dbReference type="CTD" id="399170"/>
<dbReference type="Xenbase" id="XB-GENE-484957">
    <property type="gene designation" value="akt1.S"/>
</dbReference>
<dbReference type="OrthoDB" id="63267at2759"/>
<dbReference type="Proteomes" id="UP000186698">
    <property type="component" value="Chromosome 8S"/>
</dbReference>
<dbReference type="Bgee" id="399170">
    <property type="expression patterns" value="Expressed in blastula and 19 other cell types or tissues"/>
</dbReference>
<dbReference type="GO" id="GO:0005737">
    <property type="term" value="C:cytoplasm"/>
    <property type="evidence" value="ECO:0000250"/>
    <property type="project" value="UniProtKB"/>
</dbReference>
<dbReference type="GO" id="GO:0005634">
    <property type="term" value="C:nucleus"/>
    <property type="evidence" value="ECO:0000318"/>
    <property type="project" value="GO_Central"/>
</dbReference>
<dbReference type="GO" id="GO:0005524">
    <property type="term" value="F:ATP binding"/>
    <property type="evidence" value="ECO:0007669"/>
    <property type="project" value="UniProtKB-KW"/>
</dbReference>
<dbReference type="GO" id="GO:0099104">
    <property type="term" value="F:potassium channel activator activity"/>
    <property type="evidence" value="ECO:0000250"/>
    <property type="project" value="UniProtKB"/>
</dbReference>
<dbReference type="GO" id="GO:0106310">
    <property type="term" value="F:protein serine kinase activity"/>
    <property type="evidence" value="ECO:0007669"/>
    <property type="project" value="RHEA"/>
</dbReference>
<dbReference type="GO" id="GO:0004674">
    <property type="term" value="F:protein serine/threonine kinase activity"/>
    <property type="evidence" value="ECO:0000250"/>
    <property type="project" value="UniProtKB"/>
</dbReference>
<dbReference type="GO" id="GO:0071364">
    <property type="term" value="P:cellular response to epidermal growth factor stimulus"/>
    <property type="evidence" value="ECO:0000250"/>
    <property type="project" value="UniProtKB"/>
</dbReference>
<dbReference type="GO" id="GO:0071363">
    <property type="term" value="P:cellular response to growth factor stimulus"/>
    <property type="evidence" value="ECO:0000250"/>
    <property type="project" value="UniProtKB"/>
</dbReference>
<dbReference type="GO" id="GO:0006006">
    <property type="term" value="P:glucose metabolic process"/>
    <property type="evidence" value="ECO:0007669"/>
    <property type="project" value="UniProtKB-KW"/>
</dbReference>
<dbReference type="GO" id="GO:0005978">
    <property type="term" value="P:glycogen biosynthetic process"/>
    <property type="evidence" value="ECO:0007669"/>
    <property type="project" value="UniProtKB-KW"/>
</dbReference>
<dbReference type="GO" id="GO:0008286">
    <property type="term" value="P:insulin receptor signaling pathway"/>
    <property type="evidence" value="ECO:0000250"/>
    <property type="project" value="UniProtKB"/>
</dbReference>
<dbReference type="GO" id="GO:0048009">
    <property type="term" value="P:insulin-like growth factor receptor signaling pathway"/>
    <property type="evidence" value="ECO:0000250"/>
    <property type="project" value="UniProtKB"/>
</dbReference>
<dbReference type="GO" id="GO:0043066">
    <property type="term" value="P:negative regulation of apoptotic process"/>
    <property type="evidence" value="ECO:0000250"/>
    <property type="project" value="UniProtKB"/>
</dbReference>
<dbReference type="GO" id="GO:0090201">
    <property type="term" value="P:negative regulation of release of cytochrome c from mitochondria"/>
    <property type="evidence" value="ECO:0000250"/>
    <property type="project" value="UniProtKB"/>
</dbReference>
<dbReference type="GO" id="GO:0007399">
    <property type="term" value="P:nervous system development"/>
    <property type="evidence" value="ECO:0007669"/>
    <property type="project" value="UniProtKB-KW"/>
</dbReference>
<dbReference type="GO" id="GO:0018105">
    <property type="term" value="P:peptidyl-serine phosphorylation"/>
    <property type="evidence" value="ECO:0000250"/>
    <property type="project" value="UniProtKB"/>
</dbReference>
<dbReference type="GO" id="GO:0001938">
    <property type="term" value="P:positive regulation of endothelial cell proliferation"/>
    <property type="evidence" value="ECO:0000250"/>
    <property type="project" value="UniProtKB"/>
</dbReference>
<dbReference type="GO" id="GO:0046889">
    <property type="term" value="P:positive regulation of lipid biosynthetic process"/>
    <property type="evidence" value="ECO:0000250"/>
    <property type="project" value="UniProtKB"/>
</dbReference>
<dbReference type="GO" id="GO:2000010">
    <property type="term" value="P:positive regulation of protein localization to cell surface"/>
    <property type="evidence" value="ECO:0000250"/>
    <property type="project" value="UniProtKB"/>
</dbReference>
<dbReference type="GO" id="GO:1904263">
    <property type="term" value="P:positive regulation of TORC1 signaling"/>
    <property type="evidence" value="ECO:0000250"/>
    <property type="project" value="UniProtKB"/>
</dbReference>
<dbReference type="GO" id="GO:0006468">
    <property type="term" value="P:protein phosphorylation"/>
    <property type="evidence" value="ECO:0000250"/>
    <property type="project" value="UniProtKB"/>
</dbReference>
<dbReference type="GO" id="GO:0042981">
    <property type="term" value="P:regulation of apoptotic process"/>
    <property type="evidence" value="ECO:0000250"/>
    <property type="project" value="UniProtKB"/>
</dbReference>
<dbReference type="GO" id="GO:0010975">
    <property type="term" value="P:regulation of neuron projection development"/>
    <property type="evidence" value="ECO:0000250"/>
    <property type="project" value="UniProtKB"/>
</dbReference>
<dbReference type="GO" id="GO:0070848">
    <property type="term" value="P:response to growth factor"/>
    <property type="evidence" value="ECO:0000250"/>
    <property type="project" value="UniProtKB"/>
</dbReference>
<dbReference type="GO" id="GO:0043434">
    <property type="term" value="P:response to peptide hormone"/>
    <property type="evidence" value="ECO:0000318"/>
    <property type="project" value="GO_Central"/>
</dbReference>
<dbReference type="CDD" id="cd01241">
    <property type="entry name" value="PH_PKB"/>
    <property type="match status" value="1"/>
</dbReference>
<dbReference type="CDD" id="cd05594">
    <property type="entry name" value="STKc_PKB_alpha"/>
    <property type="match status" value="1"/>
</dbReference>
<dbReference type="FunFam" id="1.10.510.10:FF:000033">
    <property type="entry name" value="Non-specific serine/threonine protein kinase"/>
    <property type="match status" value="1"/>
</dbReference>
<dbReference type="FunFam" id="2.30.29.30:FF:000027">
    <property type="entry name" value="Non-specific serine/threonine protein kinase"/>
    <property type="match status" value="1"/>
</dbReference>
<dbReference type="FunFam" id="3.30.200.20:FF:000838">
    <property type="entry name" value="Non-specific serine/threonine protein kinase"/>
    <property type="match status" value="1"/>
</dbReference>
<dbReference type="Gene3D" id="3.30.200.20">
    <property type="entry name" value="Phosphorylase Kinase, domain 1"/>
    <property type="match status" value="1"/>
</dbReference>
<dbReference type="Gene3D" id="2.30.29.30">
    <property type="entry name" value="Pleckstrin-homology domain (PH domain)/Phosphotyrosine-binding domain (PTB)"/>
    <property type="match status" value="1"/>
</dbReference>
<dbReference type="Gene3D" id="1.10.510.10">
    <property type="entry name" value="Transferase(Phosphotransferase) domain 1"/>
    <property type="match status" value="1"/>
</dbReference>
<dbReference type="InterPro" id="IPR000961">
    <property type="entry name" value="AGC-kinase_C"/>
</dbReference>
<dbReference type="InterPro" id="IPR034676">
    <property type="entry name" value="Akt1"/>
</dbReference>
<dbReference type="InterPro" id="IPR011009">
    <property type="entry name" value="Kinase-like_dom_sf"/>
</dbReference>
<dbReference type="InterPro" id="IPR011993">
    <property type="entry name" value="PH-like_dom_sf"/>
</dbReference>
<dbReference type="InterPro" id="IPR001849">
    <property type="entry name" value="PH_domain"/>
</dbReference>
<dbReference type="InterPro" id="IPR039026">
    <property type="entry name" value="PH_PKB"/>
</dbReference>
<dbReference type="InterPro" id="IPR017892">
    <property type="entry name" value="Pkinase_C"/>
</dbReference>
<dbReference type="InterPro" id="IPR000719">
    <property type="entry name" value="Prot_kinase_dom"/>
</dbReference>
<dbReference type="InterPro" id="IPR017441">
    <property type="entry name" value="Protein_kinase_ATP_BS"/>
</dbReference>
<dbReference type="InterPro" id="IPR008271">
    <property type="entry name" value="Ser/Thr_kinase_AS"/>
</dbReference>
<dbReference type="PANTHER" id="PTHR24351">
    <property type="entry name" value="RIBOSOMAL PROTEIN S6 KINASE"/>
    <property type="match status" value="1"/>
</dbReference>
<dbReference type="Pfam" id="PF00169">
    <property type="entry name" value="PH"/>
    <property type="match status" value="1"/>
</dbReference>
<dbReference type="Pfam" id="PF00069">
    <property type="entry name" value="Pkinase"/>
    <property type="match status" value="1"/>
</dbReference>
<dbReference type="Pfam" id="PF00433">
    <property type="entry name" value="Pkinase_C"/>
    <property type="match status" value="1"/>
</dbReference>
<dbReference type="SMART" id="SM00233">
    <property type="entry name" value="PH"/>
    <property type="match status" value="1"/>
</dbReference>
<dbReference type="SMART" id="SM00133">
    <property type="entry name" value="S_TK_X"/>
    <property type="match status" value="1"/>
</dbReference>
<dbReference type="SMART" id="SM00220">
    <property type="entry name" value="S_TKc"/>
    <property type="match status" value="1"/>
</dbReference>
<dbReference type="SUPFAM" id="SSF50729">
    <property type="entry name" value="PH domain-like"/>
    <property type="match status" value="1"/>
</dbReference>
<dbReference type="SUPFAM" id="SSF56112">
    <property type="entry name" value="Protein kinase-like (PK-like)"/>
    <property type="match status" value="1"/>
</dbReference>
<dbReference type="PROSITE" id="PS51285">
    <property type="entry name" value="AGC_KINASE_CTER"/>
    <property type="match status" value="1"/>
</dbReference>
<dbReference type="PROSITE" id="PS50003">
    <property type="entry name" value="PH_DOMAIN"/>
    <property type="match status" value="1"/>
</dbReference>
<dbReference type="PROSITE" id="PS00107">
    <property type="entry name" value="PROTEIN_KINASE_ATP"/>
    <property type="match status" value="1"/>
</dbReference>
<dbReference type="PROSITE" id="PS50011">
    <property type="entry name" value="PROTEIN_KINASE_DOM"/>
    <property type="match status" value="1"/>
</dbReference>
<dbReference type="PROSITE" id="PS00108">
    <property type="entry name" value="PROTEIN_KINASE_ST"/>
    <property type="match status" value="1"/>
</dbReference>
<accession>Q98TY9</accession>
<comment type="function">
    <text evidence="1 2 8">AKT1 is one of several closely related serine/threonine-protein kinases known as the AKT kinase, and which regulate many processes including metabolism, proliferation, cell survival, growth and angiogenesis. This is mediated through serine and/or threonine phosphorylation of a range of downstream substrates. Over 100 substrate candidates have been reported so far, but for most of them, no isoform specificity has been reported. Signals downstream of phosphatidylinositol 3-kinase (PI(3)K) to mediate the effects of various growth factors such as platelet-derived growth factor (PDGF), epidermal growth factor (EGF), insulin and insulin-like growth factor 1 (IGF1). Plays a role as a key modulator of the AKT-mTOR signaling pathway controlling the tempo of the process of newborn neurons integration during adult neurogenesis, including correct neuron positioning, dendritic development and synapse formation. Plays a role in glucose transport by mediating insulin-induced translocation of the GLUT4 glucose transporter to the cell surface. Mediates the antiapoptotic effects of IGF1. Mediates insulin-stimulated protein synthesis, partly by playing a role in both insulin-induced phosphorylation of 4E-BP1 and in insulin-induced activation of p70 S6 kinase. Promotes glycogen synthesis by mediating the insulin-induced activation of glycogen synthase (By similarity). Required for insulin-stimulated meiotic reinitiation during oocyte maturation. May be involved in the regulation of vesicular functions such as preciliary trafficking and endocytic recycling (By similarity).</text>
</comment>
<comment type="catalytic activity">
    <reaction evidence="2">
        <text>L-seryl-[protein] + ATP = O-phospho-L-seryl-[protein] + ADP + H(+)</text>
        <dbReference type="Rhea" id="RHEA:17989"/>
        <dbReference type="Rhea" id="RHEA-COMP:9863"/>
        <dbReference type="Rhea" id="RHEA-COMP:11604"/>
        <dbReference type="ChEBI" id="CHEBI:15378"/>
        <dbReference type="ChEBI" id="CHEBI:29999"/>
        <dbReference type="ChEBI" id="CHEBI:30616"/>
        <dbReference type="ChEBI" id="CHEBI:83421"/>
        <dbReference type="ChEBI" id="CHEBI:456216"/>
        <dbReference type="EC" id="2.7.11.1"/>
    </reaction>
</comment>
<comment type="catalytic activity">
    <reaction evidence="2">
        <text>L-threonyl-[protein] + ATP = O-phospho-L-threonyl-[protein] + ADP + H(+)</text>
        <dbReference type="Rhea" id="RHEA:46608"/>
        <dbReference type="Rhea" id="RHEA-COMP:11060"/>
        <dbReference type="Rhea" id="RHEA-COMP:11605"/>
        <dbReference type="ChEBI" id="CHEBI:15378"/>
        <dbReference type="ChEBI" id="CHEBI:30013"/>
        <dbReference type="ChEBI" id="CHEBI:30616"/>
        <dbReference type="ChEBI" id="CHEBI:61977"/>
        <dbReference type="ChEBI" id="CHEBI:456216"/>
        <dbReference type="EC" id="2.7.11.1"/>
    </reaction>
</comment>
<comment type="activity regulation">
    <text evidence="8">Activated in response to insulin. Three specific sites, one in the kinase domain (Thr-309) and the two other ones in the C-terminal regulatory region (Ser-474 and Tyr-475), need to be phosphorylated for its full activation.</text>
</comment>
<comment type="subcellular location">
    <subcellularLocation>
        <location evidence="2">Cytoplasm</location>
    </subcellularLocation>
    <subcellularLocation>
        <location evidence="2">Nucleus</location>
    </subcellularLocation>
    <text evidence="2">Nucleus after activation by integrin-linked protein kinase 1 (ILK1).</text>
</comment>
<comment type="tissue specificity">
    <text evidence="8">Expressed in the oocyte.</text>
</comment>
<comment type="domain">
    <text evidence="1">Binding of the PH domain to phosphatidylinositol 3,4,5-trisphosphate (PI(3,4,5)P3) following phosphatidylinositol 3-kinase alpha (PIK3CA) activity results in its targeting to the plasma membrane.</text>
</comment>
<comment type="PTM">
    <text evidence="1 2">Cleavage by caspase-3/CASP3 (By similarity). Cleaved at the caspase-3 consensus site Asp-463 during apoptosis, resulting in down-regulation of the AKT signaling pathway and decreased cell survival (By similarity).</text>
</comment>
<comment type="PTM">
    <text evidence="1 2">Phosphorylation on Thr-309 and Ser-474 is required for full activity (By similarity). Phosphorylation of the activation loop at Thr-309 by PDPK1/PDK1 is a prerequisite for full activation (By similarity). Phosphorylation by mTORC2 at Ser-474 in response to growth factors plays a key role in AKT1 activation by facilitating subsequent phosphorylation of the activation loop by PDPK1/PDK1 (By similarity).</text>
</comment>
<comment type="similarity">
    <text evidence="9">Belongs to the protein kinase superfamily. AGC Ser/Thr protein kinase family. RAC subfamily.</text>
</comment>
<keyword id="KW-0067">ATP-binding</keyword>
<keyword id="KW-0119">Carbohydrate metabolism</keyword>
<keyword id="KW-0963">Cytoplasm</keyword>
<keyword id="KW-0313">Glucose metabolism</keyword>
<keyword id="KW-0320">Glycogen biosynthesis</keyword>
<keyword id="KW-0325">Glycoprotein</keyword>
<keyword id="KW-0418">Kinase</keyword>
<keyword id="KW-0524">Neurogenesis</keyword>
<keyword id="KW-0547">Nucleotide-binding</keyword>
<keyword id="KW-0539">Nucleus</keyword>
<keyword id="KW-0597">Phosphoprotein</keyword>
<keyword id="KW-1185">Reference proteome</keyword>
<keyword id="KW-0723">Serine/threonine-protein kinase</keyword>
<keyword id="KW-0762">Sugar transport</keyword>
<keyword id="KW-0808">Transferase</keyword>
<keyword id="KW-0813">Transport</keyword>
<name>AKT1_XENLA</name>
<protein>
    <recommendedName>
        <fullName>RAC-alpha serine/threonine-protein kinase</fullName>
        <ecNumber evidence="2">2.7.11.1</ecNumber>
    </recommendedName>
    <alternativeName>
        <fullName>Protein kinase Akt-1</fullName>
        <shortName>xAkt</shortName>
    </alternativeName>
    <alternativeName>
        <fullName>Protein kinase B, alpha</fullName>
        <shortName>PKB alpha</shortName>
    </alternativeName>
    <alternativeName>
        <fullName>RAC-PK-alpha</fullName>
    </alternativeName>
</protein>
<sequence length="481" mass="56042">MNEVAIVKEGWLHKRGEYIKTWRPRYFLLKSDGTFIGYKERPQDVDQLETPLNNFSVAKCQLMKTERPKPNTFIIRCLQWTTVIERTFHVDSPEEREEWIQVIQHVADNLKKQEEEMMEVRSGDSPSDNSGAEEMEVSHSKPKHKVTMNEFEYLKLLGKGTFGKVILVKEKATGRYYAMKILKKEVIVAKDEVAHTLTENRVLQNSRHPFLTALKYSFQTHDRLCFVMEYANGGELFFHLSRERIFSEDRARFYGAEIVSALDYLHSEKNVVYRDLKLENLMLDKDGHIKITDFGLCKEGIKDGATMKTFCGTPEYLAPEVLEDNDYGRAVDWWGLGVVMYEMMCGRLPFYNQDHEKLFELILMEEIRFPRTLLPEAKSLLSGLLKKDPKQRLGGGPDDAKEIMQHKFFAGIVWQDVYEKKLVPPFKPQVTSETDTRYFDEEFTAQMITITPPDQDDNFEFVDNERRPHFPQFSYSASGNA</sequence>
<evidence type="ECO:0000250" key="1">
    <source>
        <dbReference type="UniProtKB" id="P31749"/>
    </source>
</evidence>
<evidence type="ECO:0000250" key="2">
    <source>
        <dbReference type="UniProtKB" id="P31750"/>
    </source>
</evidence>
<evidence type="ECO:0000255" key="3">
    <source>
        <dbReference type="PROSITE-ProRule" id="PRU00145"/>
    </source>
</evidence>
<evidence type="ECO:0000255" key="4">
    <source>
        <dbReference type="PROSITE-ProRule" id="PRU00159"/>
    </source>
</evidence>
<evidence type="ECO:0000255" key="5">
    <source>
        <dbReference type="PROSITE-ProRule" id="PRU00618"/>
    </source>
</evidence>
<evidence type="ECO:0000255" key="6">
    <source>
        <dbReference type="PROSITE-ProRule" id="PRU10027"/>
    </source>
</evidence>
<evidence type="ECO:0000256" key="7">
    <source>
        <dbReference type="SAM" id="MobiDB-lite"/>
    </source>
</evidence>
<evidence type="ECO:0000269" key="8">
    <source>
    </source>
</evidence>
<evidence type="ECO:0000305" key="9"/>
<evidence type="ECO:0000312" key="10">
    <source>
        <dbReference type="EMBL" id="AAG59601.1"/>
    </source>
</evidence>
<proteinExistence type="evidence at transcript level"/>
<reference evidence="9 10" key="1">
    <citation type="journal article" date="2003" name="Biochem. J.">
        <title>Protein kinase B/Akt is essential for the insulin- but not progesterone-stimulated resumption of meiosis in Xenopus oocytes.</title>
        <authorList>
            <person name="Andersen C.B."/>
            <person name="Sakaue H."/>
            <person name="Nedachi T."/>
            <person name="Kovacina K.S."/>
            <person name="Clayberger C."/>
            <person name="Conti M."/>
            <person name="Roth R.A."/>
        </authorList>
    </citation>
    <scope>NUCLEOTIDE SEQUENCE [MRNA]</scope>
    <scope>FUNCTION</scope>
    <scope>ACTIVITY REGULATION</scope>
    <scope>TISSUE SPECIFICITY</scope>
    <source>
        <tissue evidence="8">Oocyte</tissue>
    </source>
</reference>